<comment type="function">
    <text evidence="1">Involved in DNA repair and RecF pathway recombination.</text>
</comment>
<comment type="similarity">
    <text evidence="1">Belongs to the RecO family.</text>
</comment>
<proteinExistence type="inferred from homology"/>
<evidence type="ECO:0000255" key="1">
    <source>
        <dbReference type="HAMAP-Rule" id="MF_00201"/>
    </source>
</evidence>
<reference key="1">
    <citation type="journal article" date="2003" name="Science">
        <title>Genome of Geobacter sulfurreducens: metal reduction in subsurface environments.</title>
        <authorList>
            <person name="Methe B.A."/>
            <person name="Nelson K.E."/>
            <person name="Eisen J.A."/>
            <person name="Paulsen I.T."/>
            <person name="Nelson W.C."/>
            <person name="Heidelberg J.F."/>
            <person name="Wu D."/>
            <person name="Wu M."/>
            <person name="Ward N.L."/>
            <person name="Beanan M.J."/>
            <person name="Dodson R.J."/>
            <person name="Madupu R."/>
            <person name="Brinkac L.M."/>
            <person name="Daugherty S.C."/>
            <person name="DeBoy R.T."/>
            <person name="Durkin A.S."/>
            <person name="Gwinn M.L."/>
            <person name="Kolonay J.F."/>
            <person name="Sullivan S.A."/>
            <person name="Haft D.H."/>
            <person name="Selengut J."/>
            <person name="Davidsen T.M."/>
            <person name="Zafar N."/>
            <person name="White O."/>
            <person name="Tran B."/>
            <person name="Romero C."/>
            <person name="Forberger H.A."/>
            <person name="Weidman J.F."/>
            <person name="Khouri H.M."/>
            <person name="Feldblyum T.V."/>
            <person name="Utterback T.R."/>
            <person name="Van Aken S.E."/>
            <person name="Lovley D.R."/>
            <person name="Fraser C.M."/>
        </authorList>
    </citation>
    <scope>NUCLEOTIDE SEQUENCE [LARGE SCALE GENOMIC DNA]</scope>
    <source>
        <strain>ATCC 51573 / DSM 12127 / PCA</strain>
    </source>
</reference>
<accession>Q74FM9</accession>
<gene>
    <name evidence="1" type="primary">recO</name>
    <name type="ordered locus">GSU0577</name>
</gene>
<keyword id="KW-0227">DNA damage</keyword>
<keyword id="KW-0233">DNA recombination</keyword>
<keyword id="KW-0234">DNA repair</keyword>
<keyword id="KW-1185">Reference proteome</keyword>
<sequence length="243" mass="26102">MHPIRCEAVVLATMDYRESDRIVTLFTLCHGKVRGLARGARKSMRRFGGALEPFARLSVELVVREGLSSLRGVDIVTVYPRIRQDLAAIGHGGYAVELVDRLLPDGASVPRLFRLLVSYLEHLDQGGASPSDRRFFEANLLNILGYRLSLDACAACGVEFPADAARRAGAAGTVLCTGCGRYGAPLSAETVRLLHRCLGTGRFGAIVFPPEPLGEAGPLLDGAIGAHLARPLNSLAFLRQLTP</sequence>
<dbReference type="EMBL" id="AE017180">
    <property type="protein sequence ID" value="AAR33908.1"/>
    <property type="molecule type" value="Genomic_DNA"/>
</dbReference>
<dbReference type="RefSeq" id="NP_951635.1">
    <property type="nucleotide sequence ID" value="NC_002939.5"/>
</dbReference>
<dbReference type="RefSeq" id="WP_010941240.1">
    <property type="nucleotide sequence ID" value="NC_002939.5"/>
</dbReference>
<dbReference type="SMR" id="Q74FM9"/>
<dbReference type="FunCoup" id="Q74FM9">
    <property type="interactions" value="66"/>
</dbReference>
<dbReference type="STRING" id="243231.GSU0577"/>
<dbReference type="EnsemblBacteria" id="AAR33908">
    <property type="protein sequence ID" value="AAR33908"/>
    <property type="gene ID" value="GSU0577"/>
</dbReference>
<dbReference type="KEGG" id="gsu:GSU0577"/>
<dbReference type="PATRIC" id="fig|243231.5.peg.575"/>
<dbReference type="eggNOG" id="COG1381">
    <property type="taxonomic scope" value="Bacteria"/>
</dbReference>
<dbReference type="HOGENOM" id="CLU_066632_2_0_7"/>
<dbReference type="InParanoid" id="Q74FM9"/>
<dbReference type="OrthoDB" id="9780797at2"/>
<dbReference type="Proteomes" id="UP000000577">
    <property type="component" value="Chromosome"/>
</dbReference>
<dbReference type="GO" id="GO:0043590">
    <property type="term" value="C:bacterial nucleoid"/>
    <property type="evidence" value="ECO:0000318"/>
    <property type="project" value="GO_Central"/>
</dbReference>
<dbReference type="GO" id="GO:0006310">
    <property type="term" value="P:DNA recombination"/>
    <property type="evidence" value="ECO:0007669"/>
    <property type="project" value="UniProtKB-UniRule"/>
</dbReference>
<dbReference type="GO" id="GO:0006302">
    <property type="term" value="P:double-strand break repair"/>
    <property type="evidence" value="ECO:0000318"/>
    <property type="project" value="GO_Central"/>
</dbReference>
<dbReference type="Gene3D" id="2.40.50.140">
    <property type="entry name" value="Nucleic acid-binding proteins"/>
    <property type="match status" value="1"/>
</dbReference>
<dbReference type="Gene3D" id="1.20.1440.120">
    <property type="entry name" value="Recombination protein O, C-terminal domain"/>
    <property type="match status" value="1"/>
</dbReference>
<dbReference type="HAMAP" id="MF_00201">
    <property type="entry name" value="RecO"/>
    <property type="match status" value="1"/>
</dbReference>
<dbReference type="InterPro" id="IPR037278">
    <property type="entry name" value="ARFGAP/RecO"/>
</dbReference>
<dbReference type="InterPro" id="IPR022572">
    <property type="entry name" value="DNA_rep/recomb_RecO_N"/>
</dbReference>
<dbReference type="InterPro" id="IPR012340">
    <property type="entry name" value="NA-bd_OB-fold"/>
</dbReference>
<dbReference type="InterPro" id="IPR003717">
    <property type="entry name" value="RecO"/>
</dbReference>
<dbReference type="InterPro" id="IPR042242">
    <property type="entry name" value="RecO_C"/>
</dbReference>
<dbReference type="NCBIfam" id="TIGR00613">
    <property type="entry name" value="reco"/>
    <property type="match status" value="1"/>
</dbReference>
<dbReference type="PANTHER" id="PTHR33991">
    <property type="entry name" value="DNA REPAIR PROTEIN RECO"/>
    <property type="match status" value="1"/>
</dbReference>
<dbReference type="PANTHER" id="PTHR33991:SF1">
    <property type="entry name" value="DNA REPAIR PROTEIN RECO"/>
    <property type="match status" value="1"/>
</dbReference>
<dbReference type="Pfam" id="PF02565">
    <property type="entry name" value="RecO_C"/>
    <property type="match status" value="1"/>
</dbReference>
<dbReference type="Pfam" id="PF11967">
    <property type="entry name" value="RecO_N"/>
    <property type="match status" value="1"/>
</dbReference>
<dbReference type="SUPFAM" id="SSF57863">
    <property type="entry name" value="ArfGap/RecO-like zinc finger"/>
    <property type="match status" value="1"/>
</dbReference>
<dbReference type="SUPFAM" id="SSF50249">
    <property type="entry name" value="Nucleic acid-binding proteins"/>
    <property type="match status" value="1"/>
</dbReference>
<protein>
    <recommendedName>
        <fullName evidence="1">DNA repair protein RecO</fullName>
    </recommendedName>
    <alternativeName>
        <fullName evidence="1">Recombination protein O</fullName>
    </alternativeName>
</protein>
<feature type="chain" id="PRO_0000204955" description="DNA repair protein RecO">
    <location>
        <begin position="1"/>
        <end position="243"/>
    </location>
</feature>
<name>RECO_GEOSL</name>
<organism>
    <name type="scientific">Geobacter sulfurreducens (strain ATCC 51573 / DSM 12127 / PCA)</name>
    <dbReference type="NCBI Taxonomy" id="243231"/>
    <lineage>
        <taxon>Bacteria</taxon>
        <taxon>Pseudomonadati</taxon>
        <taxon>Thermodesulfobacteriota</taxon>
        <taxon>Desulfuromonadia</taxon>
        <taxon>Geobacterales</taxon>
        <taxon>Geobacteraceae</taxon>
        <taxon>Geobacter</taxon>
    </lineage>
</organism>